<gene>
    <name evidence="1" type="primary">dabA</name>
    <name type="ordered locus">USA300HOU_0458</name>
</gene>
<dbReference type="EMBL" id="CP000730">
    <property type="protein sequence ID" value="ABX28484.1"/>
    <property type="molecule type" value="Genomic_DNA"/>
</dbReference>
<dbReference type="RefSeq" id="WP_000211543.1">
    <property type="nucleotide sequence ID" value="NC_010079.1"/>
</dbReference>
<dbReference type="KEGG" id="sax:USA300HOU_0458"/>
<dbReference type="HOGENOM" id="CLU_009885_0_0_9"/>
<dbReference type="BioCyc" id="SAUR451516-HMP:GTV5-458-MONOMER"/>
<dbReference type="GO" id="GO:0005886">
    <property type="term" value="C:plasma membrane"/>
    <property type="evidence" value="ECO:0007669"/>
    <property type="project" value="UniProtKB-SubCell"/>
</dbReference>
<dbReference type="GO" id="GO:0008270">
    <property type="term" value="F:zinc ion binding"/>
    <property type="evidence" value="ECO:0007669"/>
    <property type="project" value="UniProtKB-UniRule"/>
</dbReference>
<dbReference type="HAMAP" id="MF_01871">
    <property type="entry name" value="DabA"/>
    <property type="match status" value="1"/>
</dbReference>
<dbReference type="InterPro" id="IPR018752">
    <property type="entry name" value="DabA"/>
</dbReference>
<dbReference type="PANTHER" id="PTHR38344:SF1">
    <property type="entry name" value="INORGANIC CARBON TRANSPORTER SUBUNIT DABA-RELATED"/>
    <property type="match status" value="1"/>
</dbReference>
<dbReference type="PANTHER" id="PTHR38344">
    <property type="entry name" value="UPF0753 PROTEIN AQ_863"/>
    <property type="match status" value="1"/>
</dbReference>
<dbReference type="Pfam" id="PF10070">
    <property type="entry name" value="DabA"/>
    <property type="match status" value="1"/>
</dbReference>
<protein>
    <recommendedName>
        <fullName evidence="1">Probable inorganic carbon transporter subunit DabA</fullName>
    </recommendedName>
</protein>
<accession>A8Z0V3</accession>
<feature type="chain" id="PRO_0000387314" description="Probable inorganic carbon transporter subunit DabA">
    <location>
        <begin position="1"/>
        <end position="901"/>
    </location>
</feature>
<feature type="binding site" evidence="1">
    <location>
        <position position="424"/>
    </location>
    <ligand>
        <name>Zn(2+)</name>
        <dbReference type="ChEBI" id="CHEBI:29105"/>
    </ligand>
</feature>
<feature type="binding site" evidence="1">
    <location>
        <position position="426"/>
    </location>
    <ligand>
        <name>Zn(2+)</name>
        <dbReference type="ChEBI" id="CHEBI:29105"/>
    </ligand>
</feature>
<feature type="binding site" evidence="1">
    <location>
        <position position="606"/>
    </location>
    <ligand>
        <name>Zn(2+)</name>
        <dbReference type="ChEBI" id="CHEBI:29105"/>
    </ligand>
</feature>
<feature type="binding site" evidence="1">
    <location>
        <position position="621"/>
    </location>
    <ligand>
        <name>Zn(2+)</name>
        <dbReference type="ChEBI" id="CHEBI:29105"/>
    </ligand>
</feature>
<sequence>MTTQLNINSVIENAKRVITPLSPISIFAARNPWEGLEADTFEDVAKWLRDVRDVDIFPNKALIESAVARGELDESVFNQLVTDMLLEHHYNIPQHYINLYIDNIKTLKDVPASYMNHSNVDVVADLLLEKSKRDMAESYHHYDVRPMSDAIIDEQGEPLSEQVNRQMIKWTKLYIDQFLSSWTMPKREQSFYHAWLHLAQHDHSFTKAQRQVIKGLPNDPEMTIESVLTHFSIDQEDYQAYVEGHLLALPGWAGMLYYRSQQHYFEQHLLTDYLAIRLVVEQLLVGDEFKSVAKDCESRSENWFKQTVASWCYYSDMPSDVLLQHDVNEIQTFIHFAATMNKNVFKNLWLIAWEMTYESQLKQKIKAGHESVAGALDVNQVNVSENDNANQPHSVLLNDTQAVDENNSELNQMGTSTKAQIAFCIDVRSEPFRRHIEAAGPFETIGIAGFFGLPIQKDAVDEQFKHDSLPVMVPPAYRIKEFADRYDMNVYRQQQQTMSSMFYTFKLMKNNVMPSLLLPELSGPFLSLSTIVNSIMPRKSRASLQKIKQKWLKKPETKLTIDREFDRTSDLPVGFTEQEQIDFALQALKLMDLTEAFAPFVVLAGHASHSHNNPHHASLECGACGGASSGFNAKLLAMICNRPNVRQGLKQSGVYIPETTVFAVAEHHTSTDTLAWVYVPDTLSSIALDAYESLNDAMPMISEHANRERLDKLPTIGRVNHPVEEAQRFASDWSEVRPEWGLAKNASFIIGRRQLTKGIDLEGRTFLHNYDWRKDKDGTLLNTIISGPALVAQWINLQYYASTVAPHFYGSGNKATQTVTSGVGVMQGNASDLMYGLSWQSVMAADRTMYHSPIRLLVVIQAPDYVVARLLANNEHFARKVSNHWLRLMSVNEEGRFKSWI</sequence>
<proteinExistence type="inferred from homology"/>
<comment type="function">
    <text evidence="1">Part of an energy-coupled inorganic carbon pump.</text>
</comment>
<comment type="cofactor">
    <cofactor evidence="1">
        <name>Zn(2+)</name>
        <dbReference type="ChEBI" id="CHEBI:29105"/>
    </cofactor>
</comment>
<comment type="subunit">
    <text evidence="1">Forms a complex with DabB.</text>
</comment>
<comment type="subcellular location">
    <subcellularLocation>
        <location evidence="1">Cell membrane</location>
        <topology evidence="1">Peripheral membrane protein</topology>
    </subcellularLocation>
</comment>
<comment type="similarity">
    <text evidence="1">Belongs to the inorganic carbon transporter (TC 9.A.2) DabA family.</text>
</comment>
<name>DABA_STAAT</name>
<keyword id="KW-1003">Cell membrane</keyword>
<keyword id="KW-0472">Membrane</keyword>
<keyword id="KW-0479">Metal-binding</keyword>
<keyword id="KW-0813">Transport</keyword>
<keyword id="KW-0862">Zinc</keyword>
<reference key="1">
    <citation type="journal article" date="2007" name="BMC Microbiol.">
        <title>Subtle genetic changes enhance virulence of methicillin resistant and sensitive Staphylococcus aureus.</title>
        <authorList>
            <person name="Highlander S.K."/>
            <person name="Hulten K.G."/>
            <person name="Qin X."/>
            <person name="Jiang H."/>
            <person name="Yerrapragada S."/>
            <person name="Mason E.O. Jr."/>
            <person name="Shang Y."/>
            <person name="Williams T.M."/>
            <person name="Fortunov R.M."/>
            <person name="Liu Y."/>
            <person name="Igboeli O."/>
            <person name="Petrosino J."/>
            <person name="Tirumalai M."/>
            <person name="Uzman A."/>
            <person name="Fox G.E."/>
            <person name="Cardenas A.M."/>
            <person name="Muzny D.M."/>
            <person name="Hemphill L."/>
            <person name="Ding Y."/>
            <person name="Dugan S."/>
            <person name="Blyth P.R."/>
            <person name="Buhay C.J."/>
            <person name="Dinh H.H."/>
            <person name="Hawes A.C."/>
            <person name="Holder M."/>
            <person name="Kovar C.L."/>
            <person name="Lee S.L."/>
            <person name="Liu W."/>
            <person name="Nazareth L.V."/>
            <person name="Wang Q."/>
            <person name="Zhou J."/>
            <person name="Kaplan S.L."/>
            <person name="Weinstock G.M."/>
        </authorList>
    </citation>
    <scope>NUCLEOTIDE SEQUENCE [LARGE SCALE GENOMIC DNA]</scope>
    <source>
        <strain>USA300 / TCH1516</strain>
    </source>
</reference>
<organism>
    <name type="scientific">Staphylococcus aureus (strain USA300 / TCH1516)</name>
    <dbReference type="NCBI Taxonomy" id="451516"/>
    <lineage>
        <taxon>Bacteria</taxon>
        <taxon>Bacillati</taxon>
        <taxon>Bacillota</taxon>
        <taxon>Bacilli</taxon>
        <taxon>Bacillales</taxon>
        <taxon>Staphylococcaceae</taxon>
        <taxon>Staphylococcus</taxon>
    </lineage>
</organism>
<evidence type="ECO:0000255" key="1">
    <source>
        <dbReference type="HAMAP-Rule" id="MF_01871"/>
    </source>
</evidence>